<feature type="propeptide" id="PRO_0000397400" description="Removed in mature form; by autocatalysis" evidence="1">
    <location>
        <position position="1"/>
    </location>
</feature>
<feature type="chain" id="PRO_0000397401" description="Proteasome subunit beta 1">
    <location>
        <begin position="2"/>
        <end position="201"/>
    </location>
</feature>
<feature type="active site" description="Nucleophile" evidence="1">
    <location>
        <position position="2"/>
    </location>
</feature>
<comment type="function">
    <text evidence="1">Component of the proteasome core, a large protease complex with broad specificity involved in protein degradation.</text>
</comment>
<comment type="catalytic activity">
    <reaction evidence="1">
        <text>Cleavage of peptide bonds with very broad specificity.</text>
        <dbReference type="EC" id="3.4.25.1"/>
    </reaction>
</comment>
<comment type="activity regulation">
    <text evidence="1">The formation of the proteasomal ATPase PAN-20S proteasome complex, via the docking of the C-termini of PAN into the intersubunit pockets in the alpha-rings, triggers opening of the gate for substrate entry. Interconversion between the open-gate and close-gate conformations leads to a dynamic regulation of the 20S proteasome proteolysis activity.</text>
</comment>
<comment type="subunit">
    <text evidence="1">The 20S proteasome core is composed of 14 alpha and 14 beta subunits that assemble into four stacked heptameric rings, resulting in a barrel-shaped structure. The two inner rings, each composed of seven catalytic beta subunits, are sandwiched by two outer rings, each composed of seven alpha subunits. The catalytic chamber with the active sites is on the inside of the barrel. Has a gated structure, the ends of the cylinder being occluded by the N-termini of the alpha-subunits. Is capped at one or both ends by the proteasome regulatory ATPase, PAN.</text>
</comment>
<comment type="subcellular location">
    <subcellularLocation>
        <location evidence="1">Cytoplasm</location>
    </subcellularLocation>
</comment>
<comment type="similarity">
    <text evidence="1">Belongs to the peptidase T1B family.</text>
</comment>
<gene>
    <name evidence="1" type="primary">psmB1</name>
    <name type="ordered locus">Pcal_0021</name>
</gene>
<name>PSB1_PYRCJ</name>
<proteinExistence type="inferred from homology"/>
<sequence>MTTTVGIVAKDGVVLATDKRVTAGYYIAHKAGEKIWKIDDHVAATMSGGVADLQSVLSFLSLRAREYRVEHKRPIPIRALVNYVSLLLFYSRPYIYLVHSIVGGVDAEEGPVLYMVDWLGTVTKEKYIATGSGSPYAKGALEVAYREDLTIDEAVELAIRAVKAAIRNDPGSGEGIDVVTITKSDGFRRVFTTQQKIIIPE</sequence>
<accession>A3MS44</accession>
<protein>
    <recommendedName>
        <fullName evidence="1">Proteasome subunit beta 1</fullName>
        <ecNumber evidence="1">3.4.25.1</ecNumber>
    </recommendedName>
    <alternativeName>
        <fullName evidence="1">20S proteasome beta subunit 1</fullName>
    </alternativeName>
    <alternativeName>
        <fullName evidence="1">Proteasome core protein PsmB 1</fullName>
    </alternativeName>
</protein>
<dbReference type="EC" id="3.4.25.1" evidence="1"/>
<dbReference type="EMBL" id="CP000561">
    <property type="protein sequence ID" value="ABO07461.1"/>
    <property type="molecule type" value="Genomic_DNA"/>
</dbReference>
<dbReference type="RefSeq" id="WP_011848718.1">
    <property type="nucleotide sequence ID" value="NC_009073.1"/>
</dbReference>
<dbReference type="SMR" id="A3MS44"/>
<dbReference type="STRING" id="410359.Pcal_0021"/>
<dbReference type="MEROPS" id="T01.002"/>
<dbReference type="GeneID" id="4909439"/>
<dbReference type="KEGG" id="pcl:Pcal_0021"/>
<dbReference type="eggNOG" id="arCOG00970">
    <property type="taxonomic scope" value="Archaea"/>
</dbReference>
<dbReference type="HOGENOM" id="CLU_035750_7_2_2"/>
<dbReference type="OrthoDB" id="6330at2157"/>
<dbReference type="Proteomes" id="UP000001431">
    <property type="component" value="Chromosome"/>
</dbReference>
<dbReference type="GO" id="GO:0005737">
    <property type="term" value="C:cytoplasm"/>
    <property type="evidence" value="ECO:0007669"/>
    <property type="project" value="UniProtKB-SubCell"/>
</dbReference>
<dbReference type="GO" id="GO:0019774">
    <property type="term" value="C:proteasome core complex, beta-subunit complex"/>
    <property type="evidence" value="ECO:0007669"/>
    <property type="project" value="UniProtKB-UniRule"/>
</dbReference>
<dbReference type="GO" id="GO:0004298">
    <property type="term" value="F:threonine-type endopeptidase activity"/>
    <property type="evidence" value="ECO:0007669"/>
    <property type="project" value="UniProtKB-UniRule"/>
</dbReference>
<dbReference type="GO" id="GO:0010498">
    <property type="term" value="P:proteasomal protein catabolic process"/>
    <property type="evidence" value="ECO:0007669"/>
    <property type="project" value="UniProtKB-UniRule"/>
</dbReference>
<dbReference type="FunFam" id="3.60.20.10:FF:000049">
    <property type="entry name" value="Proteasome subunit beta"/>
    <property type="match status" value="1"/>
</dbReference>
<dbReference type="Gene3D" id="3.60.20.10">
    <property type="entry name" value="Glutamine Phosphoribosylpyrophosphate, subunit 1, domain 1"/>
    <property type="match status" value="1"/>
</dbReference>
<dbReference type="HAMAP" id="MF_02113_A">
    <property type="entry name" value="Proteasome_B_A"/>
    <property type="match status" value="1"/>
</dbReference>
<dbReference type="InterPro" id="IPR029055">
    <property type="entry name" value="Ntn_hydrolases_N"/>
</dbReference>
<dbReference type="InterPro" id="IPR019983">
    <property type="entry name" value="Pept_T1A_Psome_bsu_arc"/>
</dbReference>
<dbReference type="InterPro" id="IPR000243">
    <property type="entry name" value="Pept_T1A_subB"/>
</dbReference>
<dbReference type="InterPro" id="IPR016050">
    <property type="entry name" value="Proteasome_bsu_CS"/>
</dbReference>
<dbReference type="InterPro" id="IPR001353">
    <property type="entry name" value="Proteasome_sua/b"/>
</dbReference>
<dbReference type="InterPro" id="IPR023333">
    <property type="entry name" value="Proteasome_suB-type"/>
</dbReference>
<dbReference type="PANTHER" id="PTHR32194:SF0">
    <property type="entry name" value="ATP-DEPENDENT PROTEASE SUBUNIT HSLV"/>
    <property type="match status" value="1"/>
</dbReference>
<dbReference type="PANTHER" id="PTHR32194">
    <property type="entry name" value="METALLOPROTEASE TLDD"/>
    <property type="match status" value="1"/>
</dbReference>
<dbReference type="Pfam" id="PF00227">
    <property type="entry name" value="Proteasome"/>
    <property type="match status" value="1"/>
</dbReference>
<dbReference type="PRINTS" id="PR00141">
    <property type="entry name" value="PROTEASOME"/>
</dbReference>
<dbReference type="SUPFAM" id="SSF56235">
    <property type="entry name" value="N-terminal nucleophile aminohydrolases (Ntn hydrolases)"/>
    <property type="match status" value="1"/>
</dbReference>
<dbReference type="PROSITE" id="PS00854">
    <property type="entry name" value="PROTEASOME_BETA_1"/>
    <property type="match status" value="1"/>
</dbReference>
<dbReference type="PROSITE" id="PS51476">
    <property type="entry name" value="PROTEASOME_BETA_2"/>
    <property type="match status" value="1"/>
</dbReference>
<evidence type="ECO:0000255" key="1">
    <source>
        <dbReference type="HAMAP-Rule" id="MF_02113"/>
    </source>
</evidence>
<reference key="1">
    <citation type="submission" date="2007-02" db="EMBL/GenBank/DDBJ databases">
        <title>Complete sequence of Pyrobaculum calidifontis JCM 11548.</title>
        <authorList>
            <consortium name="US DOE Joint Genome Institute"/>
            <person name="Copeland A."/>
            <person name="Lucas S."/>
            <person name="Lapidus A."/>
            <person name="Barry K."/>
            <person name="Glavina del Rio T."/>
            <person name="Dalin E."/>
            <person name="Tice H."/>
            <person name="Pitluck S."/>
            <person name="Chain P."/>
            <person name="Malfatti S."/>
            <person name="Shin M."/>
            <person name="Vergez L."/>
            <person name="Schmutz J."/>
            <person name="Larimer F."/>
            <person name="Land M."/>
            <person name="Hauser L."/>
            <person name="Kyrpides N."/>
            <person name="Mikhailova N."/>
            <person name="Cozen A.E."/>
            <person name="Fitz-Gibbon S.T."/>
            <person name="House C.H."/>
            <person name="Saltikov C."/>
            <person name="Lowe T.M."/>
            <person name="Richardson P."/>
        </authorList>
    </citation>
    <scope>NUCLEOTIDE SEQUENCE [LARGE SCALE GENOMIC DNA]</scope>
    <source>
        <strain>DSM 21063 / JCM 11548 / VA1</strain>
    </source>
</reference>
<keyword id="KW-0068">Autocatalytic cleavage</keyword>
<keyword id="KW-0963">Cytoplasm</keyword>
<keyword id="KW-0378">Hydrolase</keyword>
<keyword id="KW-0645">Protease</keyword>
<keyword id="KW-0647">Proteasome</keyword>
<keyword id="KW-0888">Threonine protease</keyword>
<keyword id="KW-0865">Zymogen</keyword>
<organism>
    <name type="scientific">Pyrobaculum calidifontis (strain DSM 21063 / JCM 11548 / VA1)</name>
    <dbReference type="NCBI Taxonomy" id="410359"/>
    <lineage>
        <taxon>Archaea</taxon>
        <taxon>Thermoproteota</taxon>
        <taxon>Thermoprotei</taxon>
        <taxon>Thermoproteales</taxon>
        <taxon>Thermoproteaceae</taxon>
        <taxon>Pyrobaculum</taxon>
    </lineage>
</organism>